<feature type="signal peptide" evidence="2">
    <location>
        <begin position="1"/>
        <end position="21"/>
    </location>
</feature>
<feature type="propeptide" id="PRO_0000397198" evidence="1">
    <location>
        <begin position="22"/>
        <end position="51"/>
    </location>
</feature>
<feature type="peptide" id="PRO_0000397199" description="Im-conomarphin">
    <location>
        <begin position="55"/>
        <end position="69"/>
    </location>
</feature>
<feature type="propeptide" id="PRO_0000397200" evidence="1">
    <location>
        <begin position="70"/>
        <end position="71"/>
    </location>
</feature>
<feature type="region of interest" description="Disordered" evidence="3">
    <location>
        <begin position="27"/>
        <end position="48"/>
    </location>
</feature>
<feature type="compositionally biased region" description="Basic and acidic residues" evidence="3">
    <location>
        <begin position="28"/>
        <end position="39"/>
    </location>
</feature>
<feature type="modified residue" description="4-hydroxyproline" evidence="1">
    <location>
        <position position="64"/>
    </location>
</feature>
<feature type="modified residue" description="D-phenylalanine" evidence="1">
    <location>
        <position position="67"/>
    </location>
</feature>
<sequence length="71" mass="8325">MMSKLGVLLCIFLVLFPMATLQLDGDQTADRHADQRGQDLTEQQRNSKRVLKKRDWEYHAHPKPNSFWTLV</sequence>
<organism>
    <name type="scientific">Conus imperialis</name>
    <name type="common">Imperial cone</name>
    <dbReference type="NCBI Taxonomy" id="35631"/>
    <lineage>
        <taxon>Eukaryota</taxon>
        <taxon>Metazoa</taxon>
        <taxon>Spiralia</taxon>
        <taxon>Lophotrochozoa</taxon>
        <taxon>Mollusca</taxon>
        <taxon>Gastropoda</taxon>
        <taxon>Caenogastropoda</taxon>
        <taxon>Neogastropoda</taxon>
        <taxon>Conoidea</taxon>
        <taxon>Conidae</taxon>
        <taxon>Conus</taxon>
        <taxon>Stephanoconus</taxon>
    </lineage>
</organism>
<reference key="1">
    <citation type="journal article" date="2010" name="Peptides">
        <title>Novel conopeptides in a form of disulfide-crosslinked dimer.</title>
        <authorList>
            <person name="Wu X.-C."/>
            <person name="Zhou M."/>
            <person name="Peng C."/>
            <person name="Shao X.-X."/>
            <person name="Guo Z.-Y."/>
            <person name="Chi C.-W."/>
        </authorList>
    </citation>
    <scope>NUCLEOTIDE SEQUENCE [MRNA]</scope>
    <source>
        <tissue>Venom duct</tissue>
    </source>
</reference>
<dbReference type="SMR" id="P0CH39"/>
<dbReference type="GO" id="GO:0005576">
    <property type="term" value="C:extracellular region"/>
    <property type="evidence" value="ECO:0007669"/>
    <property type="project" value="UniProtKB-SubCell"/>
</dbReference>
<dbReference type="GO" id="GO:0008200">
    <property type="term" value="F:ion channel inhibitor activity"/>
    <property type="evidence" value="ECO:0007669"/>
    <property type="project" value="InterPro"/>
</dbReference>
<dbReference type="GO" id="GO:0090729">
    <property type="term" value="F:toxin activity"/>
    <property type="evidence" value="ECO:0007669"/>
    <property type="project" value="UniProtKB-KW"/>
</dbReference>
<dbReference type="InterPro" id="IPR004214">
    <property type="entry name" value="Conotoxin"/>
</dbReference>
<dbReference type="Pfam" id="PF02950">
    <property type="entry name" value="Conotoxin"/>
    <property type="match status" value="1"/>
</dbReference>
<proteinExistence type="evidence at transcript level"/>
<keyword id="KW-0165">Cleavage on pair of basic residues</keyword>
<keyword id="KW-0208">D-amino acid</keyword>
<keyword id="KW-0379">Hydroxylation</keyword>
<keyword id="KW-0528">Neurotoxin</keyword>
<keyword id="KW-0964">Secreted</keyword>
<keyword id="KW-0732">Signal</keyword>
<keyword id="KW-0800">Toxin</keyword>
<name>COMA_CONIM</name>
<evidence type="ECO:0000250" key="1"/>
<evidence type="ECO:0000255" key="2"/>
<evidence type="ECO:0000256" key="3">
    <source>
        <dbReference type="SAM" id="MobiDB-lite"/>
    </source>
</evidence>
<evidence type="ECO:0000305" key="4"/>
<accession>P0CH39</accession>
<comment type="function">
    <text>May act as a neurotoxin.</text>
</comment>
<comment type="subcellular location">
    <subcellularLocation>
        <location evidence="1">Secreted</location>
    </subcellularLocation>
</comment>
<comment type="tissue specificity">
    <text>Expressed by the venom duct.</text>
</comment>
<comment type="miscellaneous">
    <text>The mature peptide does not contain cysteine residue.</text>
</comment>
<comment type="miscellaneous">
    <text>The amino acid sequence of Im-conomarphin is identical to that of C.marmoreus conomarphin (AC B2KPN7). Their nucleotide sequences are not identical.</text>
</comment>
<comment type="similarity">
    <text evidence="4">Belongs to the conotoxin A superfamily.</text>
</comment>
<protein>
    <recommendedName>
        <fullName>Im-conomarphin</fullName>
    </recommendedName>
</protein>